<name>B3GT4_CANLF</name>
<organism>
    <name type="scientific">Canis lupus familiaris</name>
    <name type="common">Dog</name>
    <name type="synonym">Canis familiaris</name>
    <dbReference type="NCBI Taxonomy" id="9615"/>
    <lineage>
        <taxon>Eukaryota</taxon>
        <taxon>Metazoa</taxon>
        <taxon>Chordata</taxon>
        <taxon>Craniata</taxon>
        <taxon>Vertebrata</taxon>
        <taxon>Euteleostomi</taxon>
        <taxon>Mammalia</taxon>
        <taxon>Eutheria</taxon>
        <taxon>Laurasiatheria</taxon>
        <taxon>Carnivora</taxon>
        <taxon>Caniformia</taxon>
        <taxon>Canidae</taxon>
        <taxon>Canis</taxon>
    </lineage>
</organism>
<reference key="1">
    <citation type="journal article" date="2005" name="Genomics">
        <title>Genomic sequence of the class II region of the canine MHC: comparison with the MHC of other mammalian species.</title>
        <authorList>
            <person name="Debenham S.L."/>
            <person name="Hart E.A."/>
            <person name="Ashurst J.L."/>
            <person name="Howe K.L."/>
            <person name="Quail M.A."/>
            <person name="Ollier W.E.R."/>
            <person name="Binns M.M."/>
        </authorList>
    </citation>
    <scope>NUCLEOTIDE SEQUENCE [LARGE SCALE GENOMIC DNA]</scope>
    <source>
        <strain>Doberman pinscher</strain>
    </source>
</reference>
<sequence>MPLSLFRRLLLAALLLVIIWTLFGPSGIGEELLSLSLASLSPAPASPGPPLALPRLLIPNEKACGGPGSPPFLLILVCTAPENLNQRNAIRASWGGLREAQGFRVQILFLLGEPSLWHPTKEPHDIDLVREAAAQGDILQAAFRDSYRNLTLKTLSGLNWADKHCSMARYILKTDDDVFVNVPELVSELIRRGGHWEQWEKGKEPPRAVKAGDKEWEERPILKSQPMPLLYLGRVHWRVHPSRTPGSKHQISEEQWPPTWGPFPPYASGTGYVLSASAVQLILKVASRAPPLPLEDVFVGVSARRGGLTPTHCVKLAGATHYPLDRCCYGKFLLTSHKLDPWKMQEAWKLVGGSDGERTAPFCSWLQEVLGILRCRVIAWLHS</sequence>
<comment type="function">
    <text evidence="2">Involved in GM1/GD1B/GA1 ganglioside biosynthesis.</text>
</comment>
<comment type="catalytic activity">
    <reaction evidence="3">
        <text>a ganglioside GM2 (d18:1(4E)) + UDP-alpha-D-galactose = a ganglioside GM1 (d18:1(4E)) + UDP + H(+)</text>
        <dbReference type="Rhea" id="RHEA:16773"/>
        <dbReference type="ChEBI" id="CHEBI:15378"/>
        <dbReference type="ChEBI" id="CHEBI:58223"/>
        <dbReference type="ChEBI" id="CHEBI:66914"/>
        <dbReference type="ChEBI" id="CHEBI:71502"/>
        <dbReference type="ChEBI" id="CHEBI:77709"/>
        <dbReference type="EC" id="2.4.1.62"/>
    </reaction>
    <physiologicalReaction direction="left-to-right" evidence="3">
        <dbReference type="Rhea" id="RHEA:16774"/>
    </physiologicalReaction>
</comment>
<comment type="catalytic activity">
    <reaction evidence="3">
        <text>a ganglioside GM2 + UDP-alpha-D-galactose = a ganglioside GM1 + UDP + H(+)</text>
        <dbReference type="Rhea" id="RHEA:48280"/>
        <dbReference type="ChEBI" id="CHEBI:15378"/>
        <dbReference type="ChEBI" id="CHEBI:58223"/>
        <dbReference type="ChEBI" id="CHEBI:66914"/>
        <dbReference type="ChEBI" id="CHEBI:79218"/>
        <dbReference type="ChEBI" id="CHEBI:82639"/>
    </reaction>
    <physiologicalReaction direction="left-to-right" evidence="3">
        <dbReference type="Rhea" id="RHEA:48281"/>
    </physiologicalReaction>
</comment>
<comment type="catalytic activity">
    <reaction evidence="1">
        <text>a ganglioside GD2 (d18:1(4E)) + UDP-alpha-D-galactose = a ganglioside GD1b (d18:1(4E)) + UDP + H(+)</text>
        <dbReference type="Rhea" id="RHEA:47568"/>
        <dbReference type="ChEBI" id="CHEBI:15378"/>
        <dbReference type="ChEBI" id="CHEBI:58223"/>
        <dbReference type="ChEBI" id="CHEBI:66914"/>
        <dbReference type="ChEBI" id="CHEBI:78542"/>
        <dbReference type="ChEBI" id="CHEBI:87785"/>
    </reaction>
    <physiologicalReaction direction="left-to-right" evidence="1">
        <dbReference type="Rhea" id="RHEA:47569"/>
    </physiologicalReaction>
</comment>
<comment type="catalytic activity">
    <reaction evidence="1">
        <text>a ganglioside GA2 (d18:1(4E)) + UDP-alpha-D-galactose = a ganglioside GA1 (d18:1(4E)) + UDP + H(+)</text>
        <dbReference type="Rhea" id="RHEA:41960"/>
        <dbReference type="ChEBI" id="CHEBI:15378"/>
        <dbReference type="ChEBI" id="CHEBI:27731"/>
        <dbReference type="ChEBI" id="CHEBI:27938"/>
        <dbReference type="ChEBI" id="CHEBI:58223"/>
        <dbReference type="ChEBI" id="CHEBI:66914"/>
    </reaction>
    <physiologicalReaction direction="left-to-right" evidence="1">
        <dbReference type="Rhea" id="RHEA:41961"/>
    </physiologicalReaction>
</comment>
<comment type="pathway">
    <text>Protein modification; protein glycosylation.</text>
</comment>
<comment type="subcellular location">
    <subcellularLocation>
        <location evidence="3">Golgi apparatus membrane</location>
        <topology evidence="4">Single-pass type II membrane protein</topology>
    </subcellularLocation>
</comment>
<comment type="similarity">
    <text evidence="5">Belongs to the glycosyltransferase 31 family.</text>
</comment>
<dbReference type="EC" id="2.4.1.62" evidence="2"/>
<dbReference type="EMBL" id="AJ630366">
    <property type="protein sequence ID" value="CAI11440.1"/>
    <property type="molecule type" value="Genomic_DNA"/>
</dbReference>
<dbReference type="RefSeq" id="NP_001074191.1">
    <property type="nucleotide sequence ID" value="NM_001080722.1"/>
</dbReference>
<dbReference type="RefSeq" id="XP_005627127.1">
    <property type="nucleotide sequence ID" value="XM_005627070.2"/>
</dbReference>
<dbReference type="RefSeq" id="XP_013973519.1">
    <property type="nucleotide sequence ID" value="XM_014118044.1"/>
</dbReference>
<dbReference type="RefSeq" id="XP_038538676.1">
    <property type="nucleotide sequence ID" value="XM_038682748.1"/>
</dbReference>
<dbReference type="RefSeq" id="XP_038538677.1">
    <property type="nucleotide sequence ID" value="XM_038682749.1"/>
</dbReference>
<dbReference type="SMR" id="Q5TJE8"/>
<dbReference type="FunCoup" id="Q5TJE8">
    <property type="interactions" value="1"/>
</dbReference>
<dbReference type="CAZy" id="GT31">
    <property type="family name" value="Glycosyltransferase Family 31"/>
</dbReference>
<dbReference type="GlyCosmos" id="Q5TJE8">
    <property type="glycosylation" value="1 site, No reported glycans"/>
</dbReference>
<dbReference type="PaxDb" id="9612-ENSCAFP00000037824"/>
<dbReference type="Ensembl" id="ENSCAFT00845036965.1">
    <property type="protein sequence ID" value="ENSCAFP00845028946.1"/>
    <property type="gene ID" value="ENSCAFG00845020962.1"/>
</dbReference>
<dbReference type="GeneID" id="481737"/>
<dbReference type="KEGG" id="cfa:481737"/>
<dbReference type="CTD" id="8705"/>
<dbReference type="VEuPathDB" id="HostDB:ENSCAFG00845020962"/>
<dbReference type="VGNC" id="VGNC:38335">
    <property type="gene designation" value="B3GALT4"/>
</dbReference>
<dbReference type="eggNOG" id="KOG2287">
    <property type="taxonomic scope" value="Eukaryota"/>
</dbReference>
<dbReference type="GeneTree" id="ENSGT00940000161798"/>
<dbReference type="HOGENOM" id="CLU_036849_1_0_1"/>
<dbReference type="InParanoid" id="Q5TJE8"/>
<dbReference type="OMA" id="SHKLDPW"/>
<dbReference type="OrthoDB" id="2139606at2759"/>
<dbReference type="TreeFam" id="TF318639"/>
<dbReference type="Reactome" id="R-CFA-9037629">
    <property type="pathway name" value="Lewis blood group biosynthesis"/>
</dbReference>
<dbReference type="Reactome" id="R-CFA-9840309">
    <property type="pathway name" value="Glycosphingolipid biosynthesis"/>
</dbReference>
<dbReference type="UniPathway" id="UPA00378"/>
<dbReference type="Proteomes" id="UP000002254">
    <property type="component" value="Unplaced"/>
</dbReference>
<dbReference type="Proteomes" id="UP000694429">
    <property type="component" value="Unplaced"/>
</dbReference>
<dbReference type="Proteomes" id="UP000694542">
    <property type="component" value="Unplaced"/>
</dbReference>
<dbReference type="Proteomes" id="UP000805418">
    <property type="component" value="Chromosome 12"/>
</dbReference>
<dbReference type="GO" id="GO:0000139">
    <property type="term" value="C:Golgi membrane"/>
    <property type="evidence" value="ECO:0000318"/>
    <property type="project" value="GO_Central"/>
</dbReference>
<dbReference type="GO" id="GO:0047915">
    <property type="term" value="F:ganglioside galactosyltransferase activity"/>
    <property type="evidence" value="ECO:0007669"/>
    <property type="project" value="UniProtKB-EC"/>
</dbReference>
<dbReference type="GO" id="GO:0016757">
    <property type="term" value="F:glycosyltransferase activity"/>
    <property type="evidence" value="ECO:0000318"/>
    <property type="project" value="GO_Central"/>
</dbReference>
<dbReference type="GO" id="GO:0008499">
    <property type="term" value="F:N-acetyl-beta-D-glucosaminide beta-(1,3)-galactosyltransferase activity"/>
    <property type="evidence" value="ECO:0007669"/>
    <property type="project" value="Ensembl"/>
</dbReference>
<dbReference type="GO" id="GO:0001574">
    <property type="term" value="P:ganglioside biosynthetic process"/>
    <property type="evidence" value="ECO:0007669"/>
    <property type="project" value="Ensembl"/>
</dbReference>
<dbReference type="GO" id="GO:0006493">
    <property type="term" value="P:protein O-linked glycosylation"/>
    <property type="evidence" value="ECO:0000318"/>
    <property type="project" value="GO_Central"/>
</dbReference>
<dbReference type="Gene3D" id="3.90.550.50">
    <property type="match status" value="1"/>
</dbReference>
<dbReference type="InterPro" id="IPR002659">
    <property type="entry name" value="Glyco_trans_31"/>
</dbReference>
<dbReference type="PANTHER" id="PTHR11214:SF378">
    <property type="entry name" value="BETA-1,3-GALACTOSYLTRANSFERASE 4"/>
    <property type="match status" value="1"/>
</dbReference>
<dbReference type="PANTHER" id="PTHR11214">
    <property type="entry name" value="BETA-1,3-N-ACETYLGLUCOSAMINYLTRANSFERASE"/>
    <property type="match status" value="1"/>
</dbReference>
<dbReference type="Pfam" id="PF01762">
    <property type="entry name" value="Galactosyl_T"/>
    <property type="match status" value="1"/>
</dbReference>
<gene>
    <name type="primary">B3GALT4</name>
</gene>
<evidence type="ECO:0000250" key="1">
    <source>
        <dbReference type="UniProtKB" id="O88178"/>
    </source>
</evidence>
<evidence type="ECO:0000250" key="2">
    <source>
        <dbReference type="UniProtKB" id="O96024"/>
    </source>
</evidence>
<evidence type="ECO:0000250" key="3">
    <source>
        <dbReference type="UniProtKB" id="Q9Z0F0"/>
    </source>
</evidence>
<evidence type="ECO:0000255" key="4"/>
<evidence type="ECO:0000305" key="5"/>
<proteinExistence type="inferred from homology"/>
<protein>
    <recommendedName>
        <fullName>Beta-1,3-galactosyltransferase 4</fullName>
        <shortName>Beta-1,3-GalTase 4</shortName>
        <shortName>Beta3Gal-T4</shortName>
        <shortName>Beta3GalT4</shortName>
        <shortName>GalT4</shortName>
        <shortName>b3Gal-T4</shortName>
        <ecNumber evidence="2">2.4.1.62</ecNumber>
    </recommendedName>
    <alternativeName>
        <fullName>Gal-T2</fullName>
    </alternativeName>
    <alternativeName>
        <fullName>Ganglioside galactosyltransferase</fullName>
    </alternativeName>
    <alternativeName>
        <fullName>UDP-galactose:beta-N-acetyl-galactosamine-beta-1,3-galactosyltransferase</fullName>
    </alternativeName>
</protein>
<keyword id="KW-0325">Glycoprotein</keyword>
<keyword id="KW-0328">Glycosyltransferase</keyword>
<keyword id="KW-0333">Golgi apparatus</keyword>
<keyword id="KW-0443">Lipid metabolism</keyword>
<keyword id="KW-0472">Membrane</keyword>
<keyword id="KW-1185">Reference proteome</keyword>
<keyword id="KW-0735">Signal-anchor</keyword>
<keyword id="KW-0808">Transferase</keyword>
<keyword id="KW-0812">Transmembrane</keyword>
<keyword id="KW-1133">Transmembrane helix</keyword>
<feature type="chain" id="PRO_0000219159" description="Beta-1,3-galactosyltransferase 4">
    <location>
        <begin position="1"/>
        <end position="383"/>
    </location>
</feature>
<feature type="topological domain" description="Cytoplasmic" evidence="4">
    <location>
        <begin position="1"/>
        <end position="8"/>
    </location>
</feature>
<feature type="transmembrane region" description="Helical" evidence="4">
    <location>
        <begin position="9"/>
        <end position="29"/>
    </location>
</feature>
<feature type="topological domain" description="Lumenal" evidence="4">
    <location>
        <begin position="30"/>
        <end position="383"/>
    </location>
</feature>
<feature type="glycosylation site" description="N-linked (GlcNAc...) asparagine" evidence="4">
    <location>
        <position position="149"/>
    </location>
</feature>
<accession>Q5TJE8</accession>